<sequence length="141" mass="15111">MAKKIIGELKLQIPAGKANPSPPVGPALGQRGVNIMEFCKAFNERTKDMGSFNIPVVLTIYQDKSFTFITKKPPVTDLIKKAAGIQKGSDNPLKNKIGKITKAQVAEIAATKMEDLNAKSTEGAIKIVEGSARSMGIEIVD</sequence>
<gene>
    <name evidence="1" type="primary">rplK</name>
    <name type="ordered locus">WS0463</name>
</gene>
<comment type="function">
    <text evidence="1">Forms part of the ribosomal stalk which helps the ribosome interact with GTP-bound translation factors.</text>
</comment>
<comment type="subunit">
    <text evidence="1">Part of the ribosomal stalk of the 50S ribosomal subunit. Interacts with L10 and the large rRNA to form the base of the stalk. L10 forms an elongated spine to which L12 dimers bind in a sequential fashion forming a multimeric L10(L12)X complex.</text>
</comment>
<comment type="PTM">
    <text evidence="1">One or more lysine residues are methylated.</text>
</comment>
<comment type="similarity">
    <text evidence="1">Belongs to the universal ribosomal protein uL11 family.</text>
</comment>
<name>RL11_WOLSU</name>
<accession>P60106</accession>
<accession>Q7MA60</accession>
<dbReference type="EMBL" id="BX571658">
    <property type="protein sequence ID" value="CAE09603.1"/>
    <property type="molecule type" value="Genomic_DNA"/>
</dbReference>
<dbReference type="RefSeq" id="WP_011138403.1">
    <property type="nucleotide sequence ID" value="NC_005090.1"/>
</dbReference>
<dbReference type="SMR" id="P60106"/>
<dbReference type="STRING" id="273121.WS0463"/>
<dbReference type="KEGG" id="wsu:WS0463"/>
<dbReference type="eggNOG" id="COG0080">
    <property type="taxonomic scope" value="Bacteria"/>
</dbReference>
<dbReference type="HOGENOM" id="CLU_074237_2_0_7"/>
<dbReference type="Proteomes" id="UP000000422">
    <property type="component" value="Chromosome"/>
</dbReference>
<dbReference type="GO" id="GO:0022625">
    <property type="term" value="C:cytosolic large ribosomal subunit"/>
    <property type="evidence" value="ECO:0007669"/>
    <property type="project" value="TreeGrafter"/>
</dbReference>
<dbReference type="GO" id="GO:0070180">
    <property type="term" value="F:large ribosomal subunit rRNA binding"/>
    <property type="evidence" value="ECO:0007669"/>
    <property type="project" value="UniProtKB-UniRule"/>
</dbReference>
<dbReference type="GO" id="GO:0003735">
    <property type="term" value="F:structural constituent of ribosome"/>
    <property type="evidence" value="ECO:0007669"/>
    <property type="project" value="InterPro"/>
</dbReference>
<dbReference type="GO" id="GO:0006412">
    <property type="term" value="P:translation"/>
    <property type="evidence" value="ECO:0007669"/>
    <property type="project" value="UniProtKB-UniRule"/>
</dbReference>
<dbReference type="CDD" id="cd00349">
    <property type="entry name" value="Ribosomal_L11"/>
    <property type="match status" value="1"/>
</dbReference>
<dbReference type="FunFam" id="1.10.10.250:FF:000001">
    <property type="entry name" value="50S ribosomal protein L11"/>
    <property type="match status" value="1"/>
</dbReference>
<dbReference type="FunFam" id="3.30.1550.10:FF:000001">
    <property type="entry name" value="50S ribosomal protein L11"/>
    <property type="match status" value="1"/>
</dbReference>
<dbReference type="Gene3D" id="1.10.10.250">
    <property type="entry name" value="Ribosomal protein L11, C-terminal domain"/>
    <property type="match status" value="1"/>
</dbReference>
<dbReference type="Gene3D" id="3.30.1550.10">
    <property type="entry name" value="Ribosomal protein L11/L12, N-terminal domain"/>
    <property type="match status" value="1"/>
</dbReference>
<dbReference type="HAMAP" id="MF_00736">
    <property type="entry name" value="Ribosomal_uL11"/>
    <property type="match status" value="1"/>
</dbReference>
<dbReference type="InterPro" id="IPR000911">
    <property type="entry name" value="Ribosomal_uL11"/>
</dbReference>
<dbReference type="InterPro" id="IPR006519">
    <property type="entry name" value="Ribosomal_uL11_bac-typ"/>
</dbReference>
<dbReference type="InterPro" id="IPR020783">
    <property type="entry name" value="Ribosomal_uL11_C"/>
</dbReference>
<dbReference type="InterPro" id="IPR036769">
    <property type="entry name" value="Ribosomal_uL11_C_sf"/>
</dbReference>
<dbReference type="InterPro" id="IPR020785">
    <property type="entry name" value="Ribosomal_uL11_CS"/>
</dbReference>
<dbReference type="InterPro" id="IPR020784">
    <property type="entry name" value="Ribosomal_uL11_N"/>
</dbReference>
<dbReference type="InterPro" id="IPR036796">
    <property type="entry name" value="Ribosomal_uL11_N_sf"/>
</dbReference>
<dbReference type="NCBIfam" id="TIGR01632">
    <property type="entry name" value="L11_bact"/>
    <property type="match status" value="1"/>
</dbReference>
<dbReference type="PANTHER" id="PTHR11661">
    <property type="entry name" value="60S RIBOSOMAL PROTEIN L12"/>
    <property type="match status" value="1"/>
</dbReference>
<dbReference type="PANTHER" id="PTHR11661:SF1">
    <property type="entry name" value="LARGE RIBOSOMAL SUBUNIT PROTEIN UL11M"/>
    <property type="match status" value="1"/>
</dbReference>
<dbReference type="Pfam" id="PF00298">
    <property type="entry name" value="Ribosomal_L11"/>
    <property type="match status" value="1"/>
</dbReference>
<dbReference type="Pfam" id="PF03946">
    <property type="entry name" value="Ribosomal_L11_N"/>
    <property type="match status" value="1"/>
</dbReference>
<dbReference type="SMART" id="SM00649">
    <property type="entry name" value="RL11"/>
    <property type="match status" value="1"/>
</dbReference>
<dbReference type="SUPFAM" id="SSF54747">
    <property type="entry name" value="Ribosomal L11/L12e N-terminal domain"/>
    <property type="match status" value="1"/>
</dbReference>
<dbReference type="SUPFAM" id="SSF46906">
    <property type="entry name" value="Ribosomal protein L11, C-terminal domain"/>
    <property type="match status" value="1"/>
</dbReference>
<dbReference type="PROSITE" id="PS00359">
    <property type="entry name" value="RIBOSOMAL_L11"/>
    <property type="match status" value="1"/>
</dbReference>
<organism>
    <name type="scientific">Wolinella succinogenes (strain ATCC 29543 / DSM 1740 / CCUG 13145 / JCM 31913 / LMG 7466 / NCTC 11488 / FDC 602W)</name>
    <name type="common">Vibrio succinogenes</name>
    <dbReference type="NCBI Taxonomy" id="273121"/>
    <lineage>
        <taxon>Bacteria</taxon>
        <taxon>Pseudomonadati</taxon>
        <taxon>Campylobacterota</taxon>
        <taxon>Epsilonproteobacteria</taxon>
        <taxon>Campylobacterales</taxon>
        <taxon>Helicobacteraceae</taxon>
        <taxon>Wolinella</taxon>
    </lineage>
</organism>
<protein>
    <recommendedName>
        <fullName evidence="1">Large ribosomal subunit protein uL11</fullName>
    </recommendedName>
    <alternativeName>
        <fullName evidence="2">50S ribosomal protein L11</fullName>
    </alternativeName>
</protein>
<keyword id="KW-0488">Methylation</keyword>
<keyword id="KW-1185">Reference proteome</keyword>
<keyword id="KW-0687">Ribonucleoprotein</keyword>
<keyword id="KW-0689">Ribosomal protein</keyword>
<keyword id="KW-0694">RNA-binding</keyword>
<keyword id="KW-0699">rRNA-binding</keyword>
<feature type="chain" id="PRO_0000104413" description="Large ribosomal subunit protein uL11">
    <location>
        <begin position="1"/>
        <end position="141"/>
    </location>
</feature>
<proteinExistence type="inferred from homology"/>
<reference key="1">
    <citation type="journal article" date="2003" name="Proc. Natl. Acad. Sci. U.S.A.">
        <title>Complete genome sequence and analysis of Wolinella succinogenes.</title>
        <authorList>
            <person name="Baar C."/>
            <person name="Eppinger M."/>
            <person name="Raddatz G."/>
            <person name="Simon J."/>
            <person name="Lanz C."/>
            <person name="Klimmek O."/>
            <person name="Nandakumar R."/>
            <person name="Gross R."/>
            <person name="Rosinus A."/>
            <person name="Keller H."/>
            <person name="Jagtap P."/>
            <person name="Linke B."/>
            <person name="Meyer F."/>
            <person name="Lederer H."/>
            <person name="Schuster S.C."/>
        </authorList>
    </citation>
    <scope>NUCLEOTIDE SEQUENCE [LARGE SCALE GENOMIC DNA]</scope>
    <source>
        <strain>ATCC 29543 / DSM 1740 / CCUG 13145 / JCM 31913 / LMG 7466 / NCTC 11488 / FDC 602W</strain>
    </source>
</reference>
<evidence type="ECO:0000255" key="1">
    <source>
        <dbReference type="HAMAP-Rule" id="MF_00736"/>
    </source>
</evidence>
<evidence type="ECO:0000305" key="2"/>